<name>MDTK_ECOL6</name>
<sequence length="457" mass="49430">MQKYISEARLLLALAIPVILAQIAQTAMGFVDTVMAGGYSATDMAAVAIGTSIWLPAILFGHGLLLALTPVIAQLNGSGRRERIAHQVRQGFWLAGFVSVLIMLVLWNAGYIIRSMQNIDPALADKAVGYLRALLWGAPGYLFFQVARNQCEGLAKTKPGMVMGFIGLLVNIPVNYIFIYGHFGMPELGGVGCGVATAAVYWVMFLAMVSYIKRARSMRDIRNEKGTAKPDPAVMKRLIQLGLPIALALFFEVTLFAVVALLVSPLGIVDVAGHQIALNFSSLMFVLPMSLAAAVTIRVGYRLGQGSTLDAQTAARTGLMVGVCMATLTAIFTVSLREQIALLYNDNPEVVTLAAHLMLLAAVYQISDSIQVIGSGILRGYKDTRSIFYITFTAYWVLGLPSGYILALTDLVVEPMGPAGFWIGFIIGLTSAAIMMMLRMRFLQRLPSAIILQRAAR</sequence>
<protein>
    <recommendedName>
        <fullName>Multidrug resistance protein MdtK</fullName>
    </recommendedName>
    <alternativeName>
        <fullName>Multidrug-efflux transporter</fullName>
    </alternativeName>
</protein>
<proteinExistence type="inferred from homology"/>
<comment type="function">
    <text evidence="1">Multidrug efflux pump that functions probably as a Na(+)/drug antiporter.</text>
</comment>
<comment type="subcellular location">
    <subcellularLocation>
        <location evidence="1">Cell inner membrane</location>
        <topology evidence="1">Multi-pass membrane protein</topology>
    </subcellularLocation>
</comment>
<comment type="similarity">
    <text evidence="3">Belongs to the multi antimicrobial extrusion (MATE) (TC 2.A.66.1) family. MdtK subfamily.</text>
</comment>
<organism>
    <name type="scientific">Escherichia coli O6:H1 (strain CFT073 / ATCC 700928 / UPEC)</name>
    <dbReference type="NCBI Taxonomy" id="199310"/>
    <lineage>
        <taxon>Bacteria</taxon>
        <taxon>Pseudomonadati</taxon>
        <taxon>Pseudomonadota</taxon>
        <taxon>Gammaproteobacteria</taxon>
        <taxon>Enterobacterales</taxon>
        <taxon>Enterobacteriaceae</taxon>
        <taxon>Escherichia</taxon>
    </lineage>
</organism>
<dbReference type="EMBL" id="AE014075">
    <property type="protein sequence ID" value="AAN80517.1"/>
    <property type="molecule type" value="Genomic_DNA"/>
</dbReference>
<dbReference type="RefSeq" id="WP_001174963.1">
    <property type="nucleotide sequence ID" value="NZ_CP051263.1"/>
</dbReference>
<dbReference type="SMR" id="Q8FH68"/>
<dbReference type="STRING" id="199310.c2057"/>
<dbReference type="KEGG" id="ecc:c2057"/>
<dbReference type="eggNOG" id="COG0534">
    <property type="taxonomic scope" value="Bacteria"/>
</dbReference>
<dbReference type="HOGENOM" id="CLU_012893_6_0_6"/>
<dbReference type="BioCyc" id="ECOL199310:C2057-MONOMER"/>
<dbReference type="Proteomes" id="UP000001410">
    <property type="component" value="Chromosome"/>
</dbReference>
<dbReference type="GO" id="GO:0005886">
    <property type="term" value="C:plasma membrane"/>
    <property type="evidence" value="ECO:0007669"/>
    <property type="project" value="UniProtKB-SubCell"/>
</dbReference>
<dbReference type="GO" id="GO:0015297">
    <property type="term" value="F:antiporter activity"/>
    <property type="evidence" value="ECO:0007669"/>
    <property type="project" value="UniProtKB-UniRule"/>
</dbReference>
<dbReference type="GO" id="GO:0042910">
    <property type="term" value="F:xenobiotic transmembrane transporter activity"/>
    <property type="evidence" value="ECO:0007669"/>
    <property type="project" value="UniProtKB-UniRule"/>
</dbReference>
<dbReference type="GO" id="GO:0006814">
    <property type="term" value="P:sodium ion transport"/>
    <property type="evidence" value="ECO:0007669"/>
    <property type="project" value="UniProtKB-UniRule"/>
</dbReference>
<dbReference type="GO" id="GO:0006855">
    <property type="term" value="P:xenobiotic transmembrane transport"/>
    <property type="evidence" value="ECO:0007669"/>
    <property type="project" value="UniProtKB-UniRule"/>
</dbReference>
<dbReference type="CDD" id="cd13131">
    <property type="entry name" value="MATE_NorM_like"/>
    <property type="match status" value="1"/>
</dbReference>
<dbReference type="HAMAP" id="MF_00400">
    <property type="entry name" value="MdtK"/>
    <property type="match status" value="1"/>
</dbReference>
<dbReference type="InterPro" id="IPR002528">
    <property type="entry name" value="MATE_fam"/>
</dbReference>
<dbReference type="InterPro" id="IPR050222">
    <property type="entry name" value="MATE_MdtK"/>
</dbReference>
<dbReference type="InterPro" id="IPR048279">
    <property type="entry name" value="MdtK-like"/>
</dbReference>
<dbReference type="InterPro" id="IPR022913">
    <property type="entry name" value="Multidrug-R_MdtK"/>
</dbReference>
<dbReference type="NCBIfam" id="TIGR00797">
    <property type="entry name" value="matE"/>
    <property type="match status" value="1"/>
</dbReference>
<dbReference type="PANTHER" id="PTHR43298:SF2">
    <property type="entry name" value="FMN_FAD EXPORTER YEEO-RELATED"/>
    <property type="match status" value="1"/>
</dbReference>
<dbReference type="PANTHER" id="PTHR43298">
    <property type="entry name" value="MULTIDRUG RESISTANCE PROTEIN NORM-RELATED"/>
    <property type="match status" value="1"/>
</dbReference>
<dbReference type="Pfam" id="PF01554">
    <property type="entry name" value="MatE"/>
    <property type="match status" value="2"/>
</dbReference>
<dbReference type="PIRSF" id="PIRSF006603">
    <property type="entry name" value="DinF"/>
    <property type="match status" value="1"/>
</dbReference>
<accession>Q8FH68</accession>
<evidence type="ECO:0000250" key="1"/>
<evidence type="ECO:0000255" key="2"/>
<evidence type="ECO:0000305" key="3"/>
<gene>
    <name type="primary">mdtK</name>
    <name type="synonym">norM</name>
    <name type="ordered locus">c2057</name>
</gene>
<reference key="1">
    <citation type="journal article" date="2002" name="Proc. Natl. Acad. Sci. U.S.A.">
        <title>Extensive mosaic structure revealed by the complete genome sequence of uropathogenic Escherichia coli.</title>
        <authorList>
            <person name="Welch R.A."/>
            <person name="Burland V."/>
            <person name="Plunkett G. III"/>
            <person name="Redford P."/>
            <person name="Roesch P."/>
            <person name="Rasko D."/>
            <person name="Buckles E.L."/>
            <person name="Liou S.-R."/>
            <person name="Boutin A."/>
            <person name="Hackett J."/>
            <person name="Stroud D."/>
            <person name="Mayhew G.F."/>
            <person name="Rose D.J."/>
            <person name="Zhou S."/>
            <person name="Schwartz D.C."/>
            <person name="Perna N.T."/>
            <person name="Mobley H.L.T."/>
            <person name="Donnenberg M.S."/>
            <person name="Blattner F.R."/>
        </authorList>
    </citation>
    <scope>NUCLEOTIDE SEQUENCE [LARGE SCALE GENOMIC DNA]</scope>
    <source>
        <strain>CFT073 / ATCC 700928 / UPEC</strain>
    </source>
</reference>
<keyword id="KW-0050">Antiport</keyword>
<keyword id="KW-0997">Cell inner membrane</keyword>
<keyword id="KW-1003">Cell membrane</keyword>
<keyword id="KW-0406">Ion transport</keyword>
<keyword id="KW-0472">Membrane</keyword>
<keyword id="KW-1185">Reference proteome</keyword>
<keyword id="KW-0915">Sodium</keyword>
<keyword id="KW-0739">Sodium transport</keyword>
<keyword id="KW-0812">Transmembrane</keyword>
<keyword id="KW-1133">Transmembrane helix</keyword>
<keyword id="KW-0813">Transport</keyword>
<feature type="chain" id="PRO_0000164182" description="Multidrug resistance protein MdtK">
    <location>
        <begin position="1"/>
        <end position="457"/>
    </location>
</feature>
<feature type="topological domain" description="Cytoplasmic" evidence="2">
    <location>
        <begin position="1"/>
        <end position="10"/>
    </location>
</feature>
<feature type="transmembrane region" description="Helical" evidence="2">
    <location>
        <begin position="11"/>
        <end position="31"/>
    </location>
</feature>
<feature type="topological domain" description="Periplasmic" evidence="2">
    <location>
        <begin position="32"/>
        <end position="52"/>
    </location>
</feature>
<feature type="transmembrane region" description="Helical" evidence="2">
    <location>
        <begin position="53"/>
        <end position="73"/>
    </location>
</feature>
<feature type="topological domain" description="Cytoplasmic" evidence="2">
    <location>
        <begin position="74"/>
        <end position="92"/>
    </location>
</feature>
<feature type="transmembrane region" description="Helical" evidence="2">
    <location>
        <begin position="93"/>
        <end position="113"/>
    </location>
</feature>
<feature type="topological domain" description="Periplasmic" evidence="2">
    <location>
        <begin position="114"/>
        <end position="126"/>
    </location>
</feature>
<feature type="transmembrane region" description="Helical" evidence="2">
    <location>
        <begin position="127"/>
        <end position="147"/>
    </location>
</feature>
<feature type="topological domain" description="Cytoplasmic" evidence="2">
    <location>
        <begin position="148"/>
        <end position="159"/>
    </location>
</feature>
<feature type="transmembrane region" description="Helical" evidence="2">
    <location>
        <begin position="160"/>
        <end position="180"/>
    </location>
</feature>
<feature type="topological domain" description="Periplasmic" evidence="2">
    <location>
        <begin position="181"/>
        <end position="188"/>
    </location>
</feature>
<feature type="transmembrane region" description="Helical" evidence="2">
    <location>
        <begin position="189"/>
        <end position="209"/>
    </location>
</feature>
<feature type="topological domain" description="Cytoplasmic" evidence="2">
    <location>
        <begin position="210"/>
        <end position="242"/>
    </location>
</feature>
<feature type="transmembrane region" description="Helical" evidence="2">
    <location>
        <begin position="243"/>
        <end position="263"/>
    </location>
</feature>
<feature type="topological domain" description="Periplasmic" evidence="2">
    <location>
        <begin position="264"/>
        <end position="275"/>
    </location>
</feature>
<feature type="transmembrane region" description="Helical" evidence="2">
    <location>
        <begin position="276"/>
        <end position="296"/>
    </location>
</feature>
<feature type="topological domain" description="Cytoplasmic" evidence="2">
    <location>
        <begin position="297"/>
        <end position="313"/>
    </location>
</feature>
<feature type="transmembrane region" description="Helical" evidence="2">
    <location>
        <begin position="314"/>
        <end position="334"/>
    </location>
</feature>
<feature type="topological domain" description="Periplasmic" evidence="2">
    <location>
        <begin position="335"/>
        <end position="349"/>
    </location>
</feature>
<feature type="transmembrane region" description="Helical" evidence="2">
    <location>
        <begin position="350"/>
        <end position="370"/>
    </location>
</feature>
<feature type="topological domain" description="Cytoplasmic" evidence="2">
    <location>
        <begin position="371"/>
        <end position="386"/>
    </location>
</feature>
<feature type="transmembrane region" description="Helical" evidence="2">
    <location>
        <begin position="387"/>
        <end position="407"/>
    </location>
</feature>
<feature type="topological domain" description="Periplasmic" evidence="2">
    <location>
        <begin position="408"/>
        <end position="417"/>
    </location>
</feature>
<feature type="transmembrane region" description="Helical" evidence="2">
    <location>
        <begin position="418"/>
        <end position="438"/>
    </location>
</feature>
<feature type="topological domain" description="Cytoplasmic" evidence="2">
    <location>
        <begin position="439"/>
        <end position="457"/>
    </location>
</feature>